<accession>A5UHN3</accession>
<protein>
    <recommendedName>
        <fullName evidence="1">Proline--tRNA ligase</fullName>
        <ecNumber evidence="1">6.1.1.15</ecNumber>
    </recommendedName>
    <alternativeName>
        <fullName evidence="1">Prolyl-tRNA synthetase</fullName>
        <shortName evidence="1">ProRS</shortName>
    </alternativeName>
</protein>
<sequence>MRTSQYLFSTLKETPNDAQVVSHQLMLRAGMIRPMASGLYNWLPTGIRVLKKVEKIIREEMNKGGAIEVLMPVVQPAELWEESGRWDQYGPELLRFEDRGNRNFVLGPTHEEVITDLVRREVSSYKQLPLNLYQIQTKFRDEVRPRFGVMRSREFIMKDAYSFHTTQESLQATYDVMYQVYSNIFNRLGLDFRAVQADTGSIGGSASHEFQVLASSGEDDVVFSTESDFAANIELAEAIAIGERQAPTAEMCLVDTPNAKTIAELVEQFNLPIEKTVKTLIVKGADENQPLVALIIRGDHELNEIKAQKHPLVADPLEFADETEIKAKIGAGVGSLGAVNLNIPAIIDRTVALMSDFSCGANIDGKHYFNVNWVRDVAMPEVFDLRNVVEGDPSPDGKGTLQIKRGIEVGHIFQLGKKYSEAMKATVQGEDGKPLVMTMGCYGIGVTRVVASAIEQHHDERGIIWPSDEIAPFTVAIVPMNMHKSEAVQKYAEELYRTLQSQGVDVIFDDRKERPGVMFADMELIGIPHMVVIGEKNLDNGEIEYKNRRTGEKEMISKDKLLSVLNEKLGNL</sequence>
<feature type="chain" id="PRO_1000069144" description="Proline--tRNA ligase">
    <location>
        <begin position="1"/>
        <end position="572"/>
    </location>
</feature>
<name>SYP_HAEIG</name>
<comment type="function">
    <text evidence="1">Catalyzes the attachment of proline to tRNA(Pro) in a two-step reaction: proline is first activated by ATP to form Pro-AMP and then transferred to the acceptor end of tRNA(Pro). As ProRS can inadvertently accommodate and process non-cognate amino acids such as alanine and cysteine, to avoid such errors it has two additional distinct editing activities against alanine. One activity is designated as 'pretransfer' editing and involves the tRNA(Pro)-independent hydrolysis of activated Ala-AMP. The other activity is designated 'posttransfer' editing and involves deacylation of mischarged Ala-tRNA(Pro). The misacylated Cys-tRNA(Pro) is not edited by ProRS.</text>
</comment>
<comment type="catalytic activity">
    <reaction evidence="1">
        <text>tRNA(Pro) + L-proline + ATP = L-prolyl-tRNA(Pro) + AMP + diphosphate</text>
        <dbReference type="Rhea" id="RHEA:14305"/>
        <dbReference type="Rhea" id="RHEA-COMP:9700"/>
        <dbReference type="Rhea" id="RHEA-COMP:9702"/>
        <dbReference type="ChEBI" id="CHEBI:30616"/>
        <dbReference type="ChEBI" id="CHEBI:33019"/>
        <dbReference type="ChEBI" id="CHEBI:60039"/>
        <dbReference type="ChEBI" id="CHEBI:78442"/>
        <dbReference type="ChEBI" id="CHEBI:78532"/>
        <dbReference type="ChEBI" id="CHEBI:456215"/>
        <dbReference type="EC" id="6.1.1.15"/>
    </reaction>
</comment>
<comment type="subunit">
    <text evidence="1">Homodimer.</text>
</comment>
<comment type="subcellular location">
    <subcellularLocation>
        <location evidence="1">Cytoplasm</location>
    </subcellularLocation>
</comment>
<comment type="domain">
    <text evidence="1">Consists of three domains: the N-terminal catalytic domain, the editing domain and the C-terminal anticodon-binding domain.</text>
</comment>
<comment type="similarity">
    <text evidence="1">Belongs to the class-II aminoacyl-tRNA synthetase family. ProS type 1 subfamily.</text>
</comment>
<evidence type="ECO:0000255" key="1">
    <source>
        <dbReference type="HAMAP-Rule" id="MF_01569"/>
    </source>
</evidence>
<gene>
    <name evidence="1" type="primary">proS</name>
    <name type="ordered locus">CGSHiGG_07110</name>
</gene>
<organism>
    <name type="scientific">Haemophilus influenzae (strain PittGG)</name>
    <dbReference type="NCBI Taxonomy" id="374931"/>
    <lineage>
        <taxon>Bacteria</taxon>
        <taxon>Pseudomonadati</taxon>
        <taxon>Pseudomonadota</taxon>
        <taxon>Gammaproteobacteria</taxon>
        <taxon>Pasteurellales</taxon>
        <taxon>Pasteurellaceae</taxon>
        <taxon>Haemophilus</taxon>
    </lineage>
</organism>
<reference key="1">
    <citation type="journal article" date="2007" name="Genome Biol.">
        <title>Characterization and modeling of the Haemophilus influenzae core and supragenomes based on the complete genomic sequences of Rd and 12 clinical nontypeable strains.</title>
        <authorList>
            <person name="Hogg J.S."/>
            <person name="Hu F.Z."/>
            <person name="Janto B."/>
            <person name="Boissy R."/>
            <person name="Hayes J."/>
            <person name="Keefe R."/>
            <person name="Post J.C."/>
            <person name="Ehrlich G.D."/>
        </authorList>
    </citation>
    <scope>NUCLEOTIDE SEQUENCE [LARGE SCALE GENOMIC DNA]</scope>
    <source>
        <strain>PittGG</strain>
    </source>
</reference>
<keyword id="KW-0030">Aminoacyl-tRNA synthetase</keyword>
<keyword id="KW-0067">ATP-binding</keyword>
<keyword id="KW-0963">Cytoplasm</keyword>
<keyword id="KW-0436">Ligase</keyword>
<keyword id="KW-0547">Nucleotide-binding</keyword>
<keyword id="KW-0648">Protein biosynthesis</keyword>
<dbReference type="EC" id="6.1.1.15" evidence="1"/>
<dbReference type="EMBL" id="CP000672">
    <property type="protein sequence ID" value="ABR00289.1"/>
    <property type="molecule type" value="Genomic_DNA"/>
</dbReference>
<dbReference type="SMR" id="A5UHN3"/>
<dbReference type="KEGG" id="hiq:CGSHiGG_07110"/>
<dbReference type="HOGENOM" id="CLU_016739_0_0_6"/>
<dbReference type="Proteomes" id="UP000001990">
    <property type="component" value="Chromosome"/>
</dbReference>
<dbReference type="GO" id="GO:0005829">
    <property type="term" value="C:cytosol"/>
    <property type="evidence" value="ECO:0007669"/>
    <property type="project" value="TreeGrafter"/>
</dbReference>
<dbReference type="GO" id="GO:0002161">
    <property type="term" value="F:aminoacyl-tRNA deacylase activity"/>
    <property type="evidence" value="ECO:0007669"/>
    <property type="project" value="InterPro"/>
</dbReference>
<dbReference type="GO" id="GO:0005524">
    <property type="term" value="F:ATP binding"/>
    <property type="evidence" value="ECO:0007669"/>
    <property type="project" value="UniProtKB-UniRule"/>
</dbReference>
<dbReference type="GO" id="GO:0004827">
    <property type="term" value="F:proline-tRNA ligase activity"/>
    <property type="evidence" value="ECO:0007669"/>
    <property type="project" value="UniProtKB-UniRule"/>
</dbReference>
<dbReference type="GO" id="GO:0006433">
    <property type="term" value="P:prolyl-tRNA aminoacylation"/>
    <property type="evidence" value="ECO:0007669"/>
    <property type="project" value="UniProtKB-UniRule"/>
</dbReference>
<dbReference type="CDD" id="cd04334">
    <property type="entry name" value="ProRS-INS"/>
    <property type="match status" value="1"/>
</dbReference>
<dbReference type="CDD" id="cd00861">
    <property type="entry name" value="ProRS_anticodon_short"/>
    <property type="match status" value="1"/>
</dbReference>
<dbReference type="CDD" id="cd00779">
    <property type="entry name" value="ProRS_core_prok"/>
    <property type="match status" value="1"/>
</dbReference>
<dbReference type="FunFam" id="3.30.930.10:FF:000043">
    <property type="entry name" value="Proline--tRNA ligase"/>
    <property type="match status" value="1"/>
</dbReference>
<dbReference type="FunFam" id="3.30.930.10:FF:000097">
    <property type="entry name" value="Proline--tRNA ligase"/>
    <property type="match status" value="1"/>
</dbReference>
<dbReference type="FunFam" id="3.40.50.800:FF:000057">
    <property type="entry name" value="Proline--tRNA ligase"/>
    <property type="match status" value="1"/>
</dbReference>
<dbReference type="FunFam" id="3.90.960.10:FF:000001">
    <property type="entry name" value="Proline--tRNA ligase"/>
    <property type="match status" value="1"/>
</dbReference>
<dbReference type="Gene3D" id="3.40.50.800">
    <property type="entry name" value="Anticodon-binding domain"/>
    <property type="match status" value="1"/>
</dbReference>
<dbReference type="Gene3D" id="3.30.930.10">
    <property type="entry name" value="Bira Bifunctional Protein, Domain 2"/>
    <property type="match status" value="2"/>
</dbReference>
<dbReference type="HAMAP" id="MF_01569">
    <property type="entry name" value="Pro_tRNA_synth_type1"/>
    <property type="match status" value="1"/>
</dbReference>
<dbReference type="InterPro" id="IPR002314">
    <property type="entry name" value="aa-tRNA-synt_IIb"/>
</dbReference>
<dbReference type="InterPro" id="IPR006195">
    <property type="entry name" value="aa-tRNA-synth_II"/>
</dbReference>
<dbReference type="InterPro" id="IPR045864">
    <property type="entry name" value="aa-tRNA-synth_II/BPL/LPL"/>
</dbReference>
<dbReference type="InterPro" id="IPR004154">
    <property type="entry name" value="Anticodon-bd"/>
</dbReference>
<dbReference type="InterPro" id="IPR036621">
    <property type="entry name" value="Anticodon-bd_dom_sf"/>
</dbReference>
<dbReference type="InterPro" id="IPR002316">
    <property type="entry name" value="Pro-tRNA-ligase_IIa"/>
</dbReference>
<dbReference type="InterPro" id="IPR004500">
    <property type="entry name" value="Pro-tRNA-synth_IIa_bac-type"/>
</dbReference>
<dbReference type="InterPro" id="IPR023717">
    <property type="entry name" value="Pro-tRNA-Synthase_IIa_type1"/>
</dbReference>
<dbReference type="InterPro" id="IPR050062">
    <property type="entry name" value="Pro-tRNA_synthetase"/>
</dbReference>
<dbReference type="InterPro" id="IPR044140">
    <property type="entry name" value="ProRS_anticodon_short"/>
</dbReference>
<dbReference type="InterPro" id="IPR033730">
    <property type="entry name" value="ProRS_core_prok"/>
</dbReference>
<dbReference type="InterPro" id="IPR036754">
    <property type="entry name" value="YbaK/aa-tRNA-synt-asso_dom_sf"/>
</dbReference>
<dbReference type="InterPro" id="IPR007214">
    <property type="entry name" value="YbaK/aa-tRNA-synth-assoc-dom"/>
</dbReference>
<dbReference type="NCBIfam" id="NF006625">
    <property type="entry name" value="PRK09194.1"/>
    <property type="match status" value="1"/>
</dbReference>
<dbReference type="NCBIfam" id="TIGR00409">
    <property type="entry name" value="proS_fam_II"/>
    <property type="match status" value="1"/>
</dbReference>
<dbReference type="PANTHER" id="PTHR42753">
    <property type="entry name" value="MITOCHONDRIAL RIBOSOME PROTEIN L39/PROLYL-TRNA LIGASE FAMILY MEMBER"/>
    <property type="match status" value="1"/>
</dbReference>
<dbReference type="PANTHER" id="PTHR42753:SF2">
    <property type="entry name" value="PROLINE--TRNA LIGASE"/>
    <property type="match status" value="1"/>
</dbReference>
<dbReference type="Pfam" id="PF03129">
    <property type="entry name" value="HGTP_anticodon"/>
    <property type="match status" value="1"/>
</dbReference>
<dbReference type="Pfam" id="PF00587">
    <property type="entry name" value="tRNA-synt_2b"/>
    <property type="match status" value="1"/>
</dbReference>
<dbReference type="Pfam" id="PF04073">
    <property type="entry name" value="tRNA_edit"/>
    <property type="match status" value="1"/>
</dbReference>
<dbReference type="PIRSF" id="PIRSF001535">
    <property type="entry name" value="ProRS_1"/>
    <property type="match status" value="1"/>
</dbReference>
<dbReference type="PRINTS" id="PR01046">
    <property type="entry name" value="TRNASYNTHPRO"/>
</dbReference>
<dbReference type="SUPFAM" id="SSF52954">
    <property type="entry name" value="Class II aaRS ABD-related"/>
    <property type="match status" value="1"/>
</dbReference>
<dbReference type="SUPFAM" id="SSF55681">
    <property type="entry name" value="Class II aaRS and biotin synthetases"/>
    <property type="match status" value="1"/>
</dbReference>
<dbReference type="SUPFAM" id="SSF55826">
    <property type="entry name" value="YbaK/ProRS associated domain"/>
    <property type="match status" value="1"/>
</dbReference>
<dbReference type="PROSITE" id="PS50862">
    <property type="entry name" value="AA_TRNA_LIGASE_II"/>
    <property type="match status" value="1"/>
</dbReference>
<proteinExistence type="inferred from homology"/>